<name>HIS2_BACCZ</name>
<accession>Q63DW6</accession>
<protein>
    <recommendedName>
        <fullName evidence="1">Phosphoribosyl-ATP pyrophosphatase</fullName>
        <shortName evidence="1">PRA-PH</shortName>
        <ecNumber evidence="1">3.6.1.31</ecNumber>
    </recommendedName>
</protein>
<dbReference type="EC" id="3.6.1.31" evidence="1"/>
<dbReference type="EMBL" id="CP000001">
    <property type="protein sequence ID" value="AAU18952.1"/>
    <property type="molecule type" value="Genomic_DNA"/>
</dbReference>
<dbReference type="RefSeq" id="WP_001243124.1">
    <property type="nucleotide sequence ID" value="NC_006274.1"/>
</dbReference>
<dbReference type="SMR" id="Q63DW6"/>
<dbReference type="KEGG" id="bcz:BCE33L1297"/>
<dbReference type="PATRIC" id="fig|288681.22.peg.4257"/>
<dbReference type="UniPathway" id="UPA00031">
    <property type="reaction ID" value="UER00007"/>
</dbReference>
<dbReference type="Proteomes" id="UP000002612">
    <property type="component" value="Chromosome"/>
</dbReference>
<dbReference type="GO" id="GO:0005737">
    <property type="term" value="C:cytoplasm"/>
    <property type="evidence" value="ECO:0007669"/>
    <property type="project" value="UniProtKB-SubCell"/>
</dbReference>
<dbReference type="GO" id="GO:0005524">
    <property type="term" value="F:ATP binding"/>
    <property type="evidence" value="ECO:0007669"/>
    <property type="project" value="UniProtKB-KW"/>
</dbReference>
<dbReference type="GO" id="GO:0004636">
    <property type="term" value="F:phosphoribosyl-ATP diphosphatase activity"/>
    <property type="evidence" value="ECO:0007669"/>
    <property type="project" value="UniProtKB-UniRule"/>
</dbReference>
<dbReference type="GO" id="GO:0000105">
    <property type="term" value="P:L-histidine biosynthetic process"/>
    <property type="evidence" value="ECO:0007669"/>
    <property type="project" value="UniProtKB-UniRule"/>
</dbReference>
<dbReference type="CDD" id="cd11534">
    <property type="entry name" value="NTP-PPase_HisIE_like"/>
    <property type="match status" value="1"/>
</dbReference>
<dbReference type="Gene3D" id="1.10.287.1080">
    <property type="entry name" value="MazG-like"/>
    <property type="match status" value="1"/>
</dbReference>
<dbReference type="HAMAP" id="MF_01020">
    <property type="entry name" value="HisE"/>
    <property type="match status" value="1"/>
</dbReference>
<dbReference type="InterPro" id="IPR008179">
    <property type="entry name" value="HisE"/>
</dbReference>
<dbReference type="InterPro" id="IPR021130">
    <property type="entry name" value="PRib-ATP_PPHydrolase-like"/>
</dbReference>
<dbReference type="NCBIfam" id="TIGR03188">
    <property type="entry name" value="histidine_hisI"/>
    <property type="match status" value="1"/>
</dbReference>
<dbReference type="PANTHER" id="PTHR42945">
    <property type="entry name" value="HISTIDINE BIOSYNTHESIS BIFUNCTIONAL PROTEIN"/>
    <property type="match status" value="1"/>
</dbReference>
<dbReference type="PANTHER" id="PTHR42945:SF9">
    <property type="entry name" value="HISTIDINE BIOSYNTHESIS BIFUNCTIONAL PROTEIN HISIE"/>
    <property type="match status" value="1"/>
</dbReference>
<dbReference type="Pfam" id="PF01503">
    <property type="entry name" value="PRA-PH"/>
    <property type="match status" value="1"/>
</dbReference>
<dbReference type="SUPFAM" id="SSF101386">
    <property type="entry name" value="all-alpha NTP pyrophosphatases"/>
    <property type="match status" value="1"/>
</dbReference>
<feature type="chain" id="PRO_0000230166" description="Phosphoribosyl-ATP pyrophosphatase">
    <location>
        <begin position="1"/>
        <end position="107"/>
    </location>
</feature>
<organism>
    <name type="scientific">Bacillus cereus (strain ZK / E33L)</name>
    <dbReference type="NCBI Taxonomy" id="288681"/>
    <lineage>
        <taxon>Bacteria</taxon>
        <taxon>Bacillati</taxon>
        <taxon>Bacillota</taxon>
        <taxon>Bacilli</taxon>
        <taxon>Bacillales</taxon>
        <taxon>Bacillaceae</taxon>
        <taxon>Bacillus</taxon>
        <taxon>Bacillus cereus group</taxon>
    </lineage>
</organism>
<reference key="1">
    <citation type="journal article" date="2006" name="J. Bacteriol.">
        <title>Pathogenomic sequence analysis of Bacillus cereus and Bacillus thuringiensis isolates closely related to Bacillus anthracis.</title>
        <authorList>
            <person name="Han C.S."/>
            <person name="Xie G."/>
            <person name="Challacombe J.F."/>
            <person name="Altherr M.R."/>
            <person name="Bhotika S.S."/>
            <person name="Bruce D."/>
            <person name="Campbell C.S."/>
            <person name="Campbell M.L."/>
            <person name="Chen J."/>
            <person name="Chertkov O."/>
            <person name="Cleland C."/>
            <person name="Dimitrijevic M."/>
            <person name="Doggett N.A."/>
            <person name="Fawcett J.J."/>
            <person name="Glavina T."/>
            <person name="Goodwin L.A."/>
            <person name="Hill K.K."/>
            <person name="Hitchcock P."/>
            <person name="Jackson P.J."/>
            <person name="Keim P."/>
            <person name="Kewalramani A.R."/>
            <person name="Longmire J."/>
            <person name="Lucas S."/>
            <person name="Malfatti S."/>
            <person name="McMurry K."/>
            <person name="Meincke L.J."/>
            <person name="Misra M."/>
            <person name="Moseman B.L."/>
            <person name="Mundt M."/>
            <person name="Munk A.C."/>
            <person name="Okinaka R.T."/>
            <person name="Parson-Quintana B."/>
            <person name="Reilly L.P."/>
            <person name="Richardson P."/>
            <person name="Robinson D.L."/>
            <person name="Rubin E."/>
            <person name="Saunders E."/>
            <person name="Tapia R."/>
            <person name="Tesmer J.G."/>
            <person name="Thayer N."/>
            <person name="Thompson L.S."/>
            <person name="Tice H."/>
            <person name="Ticknor L.O."/>
            <person name="Wills P.L."/>
            <person name="Brettin T.S."/>
            <person name="Gilna P."/>
        </authorList>
    </citation>
    <scope>NUCLEOTIDE SEQUENCE [LARGE SCALE GENOMIC DNA]</scope>
    <source>
        <strain>ZK / E33L</strain>
    </source>
</reference>
<gene>
    <name evidence="1" type="primary">hisE</name>
    <name type="ordered locus">BCE33L1297</name>
</gene>
<comment type="catalytic activity">
    <reaction evidence="1">
        <text>1-(5-phospho-beta-D-ribosyl)-ATP + H2O = 1-(5-phospho-beta-D-ribosyl)-5'-AMP + diphosphate + H(+)</text>
        <dbReference type="Rhea" id="RHEA:22828"/>
        <dbReference type="ChEBI" id="CHEBI:15377"/>
        <dbReference type="ChEBI" id="CHEBI:15378"/>
        <dbReference type="ChEBI" id="CHEBI:33019"/>
        <dbReference type="ChEBI" id="CHEBI:59457"/>
        <dbReference type="ChEBI" id="CHEBI:73183"/>
        <dbReference type="EC" id="3.6.1.31"/>
    </reaction>
</comment>
<comment type="pathway">
    <text evidence="1">Amino-acid biosynthesis; L-histidine biosynthesis; L-histidine from 5-phospho-alpha-D-ribose 1-diphosphate: step 2/9.</text>
</comment>
<comment type="subcellular location">
    <subcellularLocation>
        <location evidence="1">Cytoplasm</location>
    </subcellularLocation>
</comment>
<comment type="similarity">
    <text evidence="1">Belongs to the PRA-PH family.</text>
</comment>
<keyword id="KW-0028">Amino-acid biosynthesis</keyword>
<keyword id="KW-0067">ATP-binding</keyword>
<keyword id="KW-0963">Cytoplasm</keyword>
<keyword id="KW-0368">Histidine biosynthesis</keyword>
<keyword id="KW-0378">Hydrolase</keyword>
<keyword id="KW-0547">Nucleotide-binding</keyword>
<proteinExistence type="inferred from homology"/>
<evidence type="ECO:0000255" key="1">
    <source>
        <dbReference type="HAMAP-Rule" id="MF_01020"/>
    </source>
</evidence>
<sequence>MRNAFTLLFETIEERKNNPLPQSYTNYLFSKGEDKILKKIGEECSEVIIASKNNDNEELVKEMVDVLYHCFVLLAEKNIPLKDIMEEVTERNGKLSRVGDRREIDTL</sequence>